<feature type="signal peptide" evidence="2">
    <location>
        <begin position="1"/>
        <end position="28"/>
    </location>
</feature>
<feature type="chain" id="PRO_5011408959" description="Putative receptor-type tyrosine-protein phosphatase mosPTP-1" evidence="2">
    <location>
        <begin position="29"/>
        <end position="1479"/>
    </location>
</feature>
<feature type="topological domain" description="Extracellular" evidence="8">
    <location>
        <begin position="29"/>
        <end position="365"/>
    </location>
</feature>
<feature type="transmembrane region" description="Helical" evidence="2">
    <location>
        <begin position="366"/>
        <end position="386"/>
    </location>
</feature>
<feature type="topological domain" description="Cytoplasmic" evidence="8">
    <location>
        <begin position="387"/>
        <end position="1479"/>
    </location>
</feature>
<feature type="domain" description="Fibronectin type-III 1" evidence="4">
    <location>
        <begin position="143"/>
        <end position="242"/>
    </location>
</feature>
<feature type="domain" description="Fibronectin type-III 2" evidence="4">
    <location>
        <begin position="243"/>
        <end position="346"/>
    </location>
</feature>
<feature type="domain" description="Tyrosine-protein phosphatase 1" evidence="3">
    <location>
        <begin position="452"/>
        <end position="717"/>
    </location>
</feature>
<feature type="domain" description="Tyrosine-protein phosphatase 2" evidence="3">
    <location>
        <begin position="740"/>
        <end position="992"/>
    </location>
</feature>
<feature type="active site" description="Phosphocysteine intermediate" evidence="3">
    <location>
        <position position="658"/>
    </location>
</feature>
<feature type="glycosylation site" description="N-linked (GlcNAc...) asparagine" evidence="5">
    <location>
        <position position="33"/>
    </location>
</feature>
<feature type="glycosylation site" description="N-linked (GlcNAc...) asparagine" evidence="5">
    <location>
        <position position="40"/>
    </location>
</feature>
<feature type="glycosylation site" description="N-linked (GlcNAc...) asparagine" evidence="5">
    <location>
        <position position="146"/>
    </location>
</feature>
<feature type="glycosylation site" description="N-linked (GlcNAc...) asparagine" evidence="5">
    <location>
        <position position="182"/>
    </location>
</feature>
<feature type="glycosylation site" description="N-linked (GlcNAc...) asparagine" evidence="5">
    <location>
        <position position="248"/>
    </location>
</feature>
<feature type="glycosylation site" description="N-linked (GlcNAc...) asparagine" evidence="5">
    <location>
        <position position="294"/>
    </location>
</feature>
<feature type="glycosylation site" description="N-linked (GlcNAc...) asparagine" evidence="5">
    <location>
        <position position="306"/>
    </location>
</feature>
<evidence type="ECO:0000250" key="1">
    <source>
        <dbReference type="UniProtKB" id="Q16K62"/>
    </source>
</evidence>
<evidence type="ECO:0000255" key="2"/>
<evidence type="ECO:0000255" key="3">
    <source>
        <dbReference type="PROSITE-ProRule" id="PRU00160"/>
    </source>
</evidence>
<evidence type="ECO:0000255" key="4">
    <source>
        <dbReference type="PROSITE-ProRule" id="PRU00316"/>
    </source>
</evidence>
<evidence type="ECO:0000255" key="5">
    <source>
        <dbReference type="PROSITE-ProRule" id="PRU00498"/>
    </source>
</evidence>
<evidence type="ECO:0000269" key="6">
    <source>
    </source>
</evidence>
<evidence type="ECO:0000303" key="7">
    <source>
    </source>
</evidence>
<evidence type="ECO:0000305" key="8"/>
<evidence type="ECO:0000312" key="9">
    <source>
        <dbReference type="EMBL" id="EDS40547.1"/>
    </source>
</evidence>
<reference evidence="9" key="1">
    <citation type="submission" date="2007-03" db="EMBL/GenBank/DDBJ databases">
        <title>Annotation of Culex pipiens quinquefasciatus.</title>
        <authorList>
            <consortium name="The Broad Institute Genome Sequencing Platform"/>
            <person name="Atkinson P.W."/>
            <person name="Hemingway J."/>
            <person name="Christensen B.M."/>
            <person name="Higgs S."/>
            <person name="Kodira C."/>
            <person name="Hannick L."/>
            <person name="Megy K."/>
            <person name="O'Leary S."/>
            <person name="Pearson M."/>
            <person name="Haas B.J."/>
            <person name="Mauceli E."/>
            <person name="Wortman J.R."/>
            <person name="Lee N.H."/>
            <person name="Guigo R."/>
            <person name="Stanke M."/>
            <person name="Alvarado L."/>
            <person name="Amedeo P."/>
            <person name="Antoine C.H."/>
            <person name="Arensburger P."/>
            <person name="Bidwell S.L."/>
            <person name="Crawford M."/>
            <person name="Camaro F."/>
            <person name="Devon K."/>
            <person name="Engels R."/>
            <person name="Hammond M."/>
            <person name="Howarth C."/>
            <person name="Koehrsen M."/>
            <person name="Lawson D."/>
            <person name="Montgomery P."/>
            <person name="Nene V."/>
            <person name="Nusbaum C."/>
            <person name="Puiu D."/>
            <person name="Romero-Severson J."/>
            <person name="Severson D.W."/>
            <person name="Shumway M."/>
            <person name="Sisk P."/>
            <person name="Stolte C."/>
            <person name="Zeng Q."/>
            <person name="Eisenstadt E."/>
            <person name="Fraser-Liggett C."/>
            <person name="Strausberg R."/>
            <person name="Galagan J."/>
            <person name="Birren B."/>
            <person name="Collins F.H."/>
        </authorList>
    </citation>
    <scope>NUCLEOTIDE SEQUENCE [LARGE SCALE GENOMIC DNA]</scope>
    <source>
        <strain evidence="9">JHB</strain>
    </source>
</reference>
<reference evidence="8" key="2">
    <citation type="journal article" date="2010" name="Cell">
        <title>A C-type lectin collaborates with a CD45 phosphatase homolog to facilitate West Nile virus infection of mosquitoes.</title>
        <authorList>
            <person name="Cheng G."/>
            <person name="Cox J."/>
            <person name="Wang P."/>
            <person name="Krishnan M.N."/>
            <person name="Dai J."/>
            <person name="Qian F."/>
            <person name="Anderson J.F."/>
            <person name="Fikrig E."/>
        </authorList>
    </citation>
    <scope>FUNCTION (MICROBIAL INFECTION)</scope>
    <scope>DISRUPTION PHENOTYPE (MICROBIAL INFECTION)</scope>
</reference>
<protein>
    <recommendedName>
        <fullName evidence="8">Putative receptor-type tyrosine-protein phosphatase mosPTP-1</fullName>
        <shortName evidence="7">mosPTP-1</shortName>
        <ecNumber evidence="3">3.1.3.48</ecNumber>
    </recommendedName>
</protein>
<sequence>MKPRLLTTVTTWLALVLPVVYLSRPCQALPTVNFTANYANSTSIASYNLEPEIPYEELEEPRVLPLKAVLPVEASTVDSSGVIDASKSEHHELPLADAAIQPHPDSNSVLKVILEQPESNDEPVTSTHGYPTFSADDNFVPSKPLNLSVLEVTSTTIKITWREPEKLNGAIHGYRVYYVHQNQTLLHLPILKAEAAVNSVYTYTLSNLKPYTDYKIIVAAFTKKFDGEPSEVSQRTDIAGPSAPKVVNLTCHSQDALFFGWRIPQTYYNTIDYYIISYRNVVYADFREIRITANASIVETSMIIPNLTTNSLYEVKVRAASTSVINPKQIILGSYSEPKKINVQLNCEKIPPPSQRQSYNDYNLAVMIGILICCFGLLFIVLTILLWKKCFHAAYYYLDDPPACGNSGGGNSAGIVDWEAPCEVAGEMRSSIPVCEFAKHVAALHVDGDIGFSKEYEAIQGEALNDEYPSEHSQHPDNKAKNRYLNVIAYDHSRVHLRQVPGQKKHLDYINANFIDGYQKPRAFIGTQGPLPCTFDCFWRMIWEQRVAIIVMITNLVERGRRKCDMYWPKDGTEMYGVIAVKLIREEVMATYTVRTFQIKHTKLKKKKASQTEKLVYQYHYTNWPDHGTPDHPLPVINFVKKSTAANPADAGPIVVHCSAGVGRTGTYIVIDAMLKQIEAKNQLNVFGFLRYIRAQRNYLVQTEEQYIFIHDALVEAIDSGETNIKMDAIGGVVNHIEFIDSQYKLITSYQPKEINLTSALKPVNAIKNRSSLVPLEGSRVHLTPKPGVEGSDYINATWLHGYRRLRDFIVTQHPLIDTFKDFWQMVWDHNAQTVVLLSSADNMSFLQFWPNESEPIESDYYRIRLVSETSENDYIVRNFVIQSIQDDYELSVRMFENPMWPDMAQPRSIFDFAVRVHERCAEYRNGPIVIVDRYGGFQACQFCCISSLAMQLEYDQTANVYTYAKLFHNKRPGIWSSYEDIRQIYRILSYMPKELGLLKCTELRTEFDEAAIMTATPDLSPLTRPAHIMSQHYNRFLKLLERWPVDQSKIGRDLGQYLRDQLKAVLGGTNIIAVKDERLVRQHQSLENIVNDVHLKAHPRSLNSTATGLSGEQCREVLSSEFLEYLNKEGGFEKLGLRGGRWMSTEAVRHVPVMAAEAIKFLKPQDSELFIDMTFGAGGHTKQILKAAPNAKIITLDRDPVAHELAQEMAKRYPGQIYPVLGRFSELPAKLKELNVNQRSIDGMIFDFGCSSMQFDEGERGFSISKNGPLDMRMDKDRCPDAPSAADVLARIDEMDLARILKVYGEEKFAKRIARAIVEARHSIKKIETTKELAELVQTCCASEFRLDKLQRPSHPATKTFQALRIFVNNELNEINYGMILAQHYLKIGGKMITITFHSLEDTIVKRHVMGNVANDMANKLPLKYCSHTICHDQTVMDAALKPNWHQMTKHVVVPSDAEVEENPRSRSAKLRAVVRVE</sequence>
<dbReference type="EC" id="3.1.3.48" evidence="3"/>
<dbReference type="EMBL" id="DS232352">
    <property type="protein sequence ID" value="EDS40547.1"/>
    <property type="molecule type" value="Genomic_DNA"/>
</dbReference>
<dbReference type="RefSeq" id="XP_001864654.1">
    <property type="nucleotide sequence ID" value="XM_001864619.1"/>
</dbReference>
<dbReference type="SMR" id="B0X4T2"/>
<dbReference type="STRING" id="7176.B0X4T2"/>
<dbReference type="EnsemblMetazoa" id="CPIJ014098-RA">
    <property type="protein sequence ID" value="CPIJ014098-PA"/>
    <property type="gene ID" value="CPIJ014098"/>
</dbReference>
<dbReference type="EnsemblMetazoa" id="CQUJHB003783.R5856">
    <property type="protein sequence ID" value="CQUJHB003783.P5856"/>
    <property type="gene ID" value="CQUJHB003783"/>
</dbReference>
<dbReference type="EnsemblMetazoa" id="CQUJHB005369.R8223">
    <property type="protein sequence ID" value="CQUJHB005369.P8223"/>
    <property type="gene ID" value="CQUJHB005369"/>
</dbReference>
<dbReference type="EnsemblMetazoa" id="XM_038262250.1">
    <property type="protein sequence ID" value="XP_038118178.1"/>
    <property type="gene ID" value="LOC6047618"/>
</dbReference>
<dbReference type="EnsemblMetazoa" id="XM_038262346.1">
    <property type="protein sequence ID" value="XP_038118274.1"/>
    <property type="gene ID" value="LOC119769520"/>
</dbReference>
<dbReference type="KEGG" id="cqu:CpipJ_CPIJ014098"/>
<dbReference type="VEuPathDB" id="VectorBase:CPIJ014098"/>
<dbReference type="VEuPathDB" id="VectorBase:CQUJHB003783"/>
<dbReference type="VEuPathDB" id="VectorBase:CQUJHB005369"/>
<dbReference type="VEuPathDB" id="VectorBase:CQUJHB008804"/>
<dbReference type="eggNOG" id="KOG0789">
    <property type="taxonomic scope" value="Eukaryota"/>
</dbReference>
<dbReference type="eggNOG" id="KOG2782">
    <property type="taxonomic scope" value="Eukaryota"/>
</dbReference>
<dbReference type="HOGENOM" id="CLU_249760_0_0_1"/>
<dbReference type="InParanoid" id="B0X4T2"/>
<dbReference type="OMA" id="CKNRYLN"/>
<dbReference type="OrthoDB" id="1845775at2759"/>
<dbReference type="Proteomes" id="UP000002320">
    <property type="component" value="Unassembled WGS sequence"/>
</dbReference>
<dbReference type="GO" id="GO:0005886">
    <property type="term" value="C:plasma membrane"/>
    <property type="evidence" value="ECO:0007669"/>
    <property type="project" value="UniProtKB-SubCell"/>
</dbReference>
<dbReference type="GO" id="GO:0008168">
    <property type="term" value="F:methyltransferase activity"/>
    <property type="evidence" value="ECO:0007669"/>
    <property type="project" value="InterPro"/>
</dbReference>
<dbReference type="GO" id="GO:0004725">
    <property type="term" value="F:protein tyrosine phosphatase activity"/>
    <property type="evidence" value="ECO:0007669"/>
    <property type="project" value="UniProtKB-EC"/>
</dbReference>
<dbReference type="GO" id="GO:0009653">
    <property type="term" value="P:anatomical structure morphogenesis"/>
    <property type="evidence" value="ECO:0007669"/>
    <property type="project" value="UniProtKB-ARBA"/>
</dbReference>
<dbReference type="GO" id="GO:0048666">
    <property type="term" value="P:neuron development"/>
    <property type="evidence" value="ECO:0007669"/>
    <property type="project" value="UniProtKB-ARBA"/>
</dbReference>
<dbReference type="CDD" id="cd00063">
    <property type="entry name" value="FN3"/>
    <property type="match status" value="2"/>
</dbReference>
<dbReference type="CDD" id="cd14549">
    <property type="entry name" value="R5-PTPc-1"/>
    <property type="match status" value="1"/>
</dbReference>
<dbReference type="FunFam" id="2.60.40.10:FF:001386">
    <property type="entry name" value="Receptor-type tyrosine-protein phosphatase gamma"/>
    <property type="match status" value="1"/>
</dbReference>
<dbReference type="FunFam" id="3.90.190.10:FF:000068">
    <property type="entry name" value="receptor-type tyrosine-protein phosphatase zeta"/>
    <property type="match status" value="1"/>
</dbReference>
<dbReference type="FunFam" id="2.60.40.10:FF:001528">
    <property type="entry name" value="Tyrosine-protein phosphatase 99A"/>
    <property type="match status" value="1"/>
</dbReference>
<dbReference type="FunFam" id="3.90.190.10:FF:000097">
    <property type="entry name" value="Tyrosine-protein phosphatase 99A"/>
    <property type="match status" value="1"/>
</dbReference>
<dbReference type="Gene3D" id="2.60.40.10">
    <property type="entry name" value="Immunoglobulins"/>
    <property type="match status" value="2"/>
</dbReference>
<dbReference type="Gene3D" id="3.90.190.10">
    <property type="entry name" value="Protein tyrosine phosphatase superfamily"/>
    <property type="match status" value="2"/>
</dbReference>
<dbReference type="Gene3D" id="1.10.150.170">
    <property type="entry name" value="Putative methyltransferase TM0872, insert domain"/>
    <property type="match status" value="1"/>
</dbReference>
<dbReference type="Gene3D" id="3.40.50.150">
    <property type="entry name" value="Vaccinia Virus protein VP39"/>
    <property type="match status" value="1"/>
</dbReference>
<dbReference type="HAMAP" id="MF_01007">
    <property type="entry name" value="16SrRNA_methyltr_H"/>
    <property type="match status" value="1"/>
</dbReference>
<dbReference type="InterPro" id="IPR003961">
    <property type="entry name" value="FN3_dom"/>
</dbReference>
<dbReference type="InterPro" id="IPR036116">
    <property type="entry name" value="FN3_sf"/>
</dbReference>
<dbReference type="InterPro" id="IPR013783">
    <property type="entry name" value="Ig-like_fold"/>
</dbReference>
<dbReference type="InterPro" id="IPR029021">
    <property type="entry name" value="Prot-tyrosine_phosphatase-like"/>
</dbReference>
<dbReference type="InterPro" id="IPR050348">
    <property type="entry name" value="Protein-Tyr_Phosphatase"/>
</dbReference>
<dbReference type="InterPro" id="IPR000242">
    <property type="entry name" value="PTP_cat"/>
</dbReference>
<dbReference type="InterPro" id="IPR002903">
    <property type="entry name" value="RsmH"/>
</dbReference>
<dbReference type="InterPro" id="IPR023397">
    <property type="entry name" value="SAM-dep_MeTrfase_MraW_recog"/>
</dbReference>
<dbReference type="InterPro" id="IPR029063">
    <property type="entry name" value="SAM-dependent_MTases_sf"/>
</dbReference>
<dbReference type="InterPro" id="IPR016130">
    <property type="entry name" value="Tyr_Pase_AS"/>
</dbReference>
<dbReference type="InterPro" id="IPR003595">
    <property type="entry name" value="Tyr_Pase_cat"/>
</dbReference>
<dbReference type="InterPro" id="IPR000387">
    <property type="entry name" value="Tyr_Pase_dom"/>
</dbReference>
<dbReference type="NCBIfam" id="TIGR00006">
    <property type="entry name" value="16S rRNA (cytosine(1402)-N(4))-methyltransferase RsmH"/>
    <property type="match status" value="1"/>
</dbReference>
<dbReference type="PANTHER" id="PTHR19134">
    <property type="entry name" value="RECEPTOR-TYPE TYROSINE-PROTEIN PHOSPHATASE"/>
    <property type="match status" value="1"/>
</dbReference>
<dbReference type="PANTHER" id="PTHR19134:SF540">
    <property type="entry name" value="TYROSINE-PROTEIN PHOSPHATASE 99A"/>
    <property type="match status" value="1"/>
</dbReference>
<dbReference type="Pfam" id="PF00041">
    <property type="entry name" value="fn3"/>
    <property type="match status" value="2"/>
</dbReference>
<dbReference type="Pfam" id="PF01795">
    <property type="entry name" value="Methyltransf_5"/>
    <property type="match status" value="1"/>
</dbReference>
<dbReference type="Pfam" id="PF20180">
    <property type="entry name" value="UQCC2_CBP6"/>
    <property type="match status" value="1"/>
</dbReference>
<dbReference type="Pfam" id="PF00102">
    <property type="entry name" value="Y_phosphatase"/>
    <property type="match status" value="2"/>
</dbReference>
<dbReference type="PRINTS" id="PR00700">
    <property type="entry name" value="PRTYPHPHTASE"/>
</dbReference>
<dbReference type="SMART" id="SM00060">
    <property type="entry name" value="FN3"/>
    <property type="match status" value="2"/>
</dbReference>
<dbReference type="SMART" id="SM00194">
    <property type="entry name" value="PTPc"/>
    <property type="match status" value="2"/>
</dbReference>
<dbReference type="SMART" id="SM00404">
    <property type="entry name" value="PTPc_motif"/>
    <property type="match status" value="2"/>
</dbReference>
<dbReference type="SUPFAM" id="SSF52799">
    <property type="entry name" value="(Phosphotyrosine protein) phosphatases II"/>
    <property type="match status" value="2"/>
</dbReference>
<dbReference type="SUPFAM" id="SSF49265">
    <property type="entry name" value="Fibronectin type III"/>
    <property type="match status" value="1"/>
</dbReference>
<dbReference type="SUPFAM" id="SSF81799">
    <property type="entry name" value="Putative methyltransferase TM0872, insert domain"/>
    <property type="match status" value="1"/>
</dbReference>
<dbReference type="SUPFAM" id="SSF53335">
    <property type="entry name" value="S-adenosyl-L-methionine-dependent methyltransferases"/>
    <property type="match status" value="1"/>
</dbReference>
<dbReference type="PROSITE" id="PS50853">
    <property type="entry name" value="FN3"/>
    <property type="match status" value="2"/>
</dbReference>
<dbReference type="PROSITE" id="PS00383">
    <property type="entry name" value="TYR_PHOSPHATASE_1"/>
    <property type="match status" value="1"/>
</dbReference>
<dbReference type="PROSITE" id="PS50056">
    <property type="entry name" value="TYR_PHOSPHATASE_2"/>
    <property type="match status" value="1"/>
</dbReference>
<dbReference type="PROSITE" id="PS50055">
    <property type="entry name" value="TYR_PHOSPHATASE_PTP"/>
    <property type="match status" value="2"/>
</dbReference>
<comment type="function">
    <text evidence="8">Putative protein tyrosine-protein phosphatase.</text>
</comment>
<comment type="function">
    <text evidence="6">(Microbial infection) Facilitates West Nile virus infection in mosquitoes.</text>
</comment>
<comment type="catalytic activity">
    <reaction evidence="3">
        <text>O-phospho-L-tyrosyl-[protein] + H2O = L-tyrosyl-[protein] + phosphate</text>
        <dbReference type="Rhea" id="RHEA:10684"/>
        <dbReference type="Rhea" id="RHEA-COMP:10136"/>
        <dbReference type="Rhea" id="RHEA-COMP:20101"/>
        <dbReference type="ChEBI" id="CHEBI:15377"/>
        <dbReference type="ChEBI" id="CHEBI:43474"/>
        <dbReference type="ChEBI" id="CHEBI:46858"/>
        <dbReference type="ChEBI" id="CHEBI:61978"/>
        <dbReference type="EC" id="3.1.3.48"/>
    </reaction>
</comment>
<comment type="subunit">
    <text evidence="1">Interacts with C-type lectin mosGCTL-1 (By similarity). Interacts with C-type lectin mosGCTL-7 (By similarity).</text>
</comment>
<comment type="subcellular location">
    <subcellularLocation>
        <location evidence="1">Cell membrane</location>
        <topology evidence="2">Single-pass type I membrane protein</topology>
    </subcellularLocation>
</comment>
<comment type="disruption phenotype">
    <text evidence="6">(Microbial infection) RNAi-mediated knockdown results in reduced West Nile virus infection levels.</text>
</comment>
<comment type="similarity">
    <text evidence="8">Belongs to the protein-tyrosine phosphatase family. Receptor class subfamily.</text>
</comment>
<name>PTP1_CULQU</name>
<proteinExistence type="inferred from homology"/>
<gene>
    <name evidence="9" type="ORF">CpipJ_CPIJ014098</name>
</gene>
<organism>
    <name type="scientific">Culex quinquefasciatus</name>
    <name type="common">Southern house mosquito</name>
    <name type="synonym">Culex pungens</name>
    <dbReference type="NCBI Taxonomy" id="7176"/>
    <lineage>
        <taxon>Eukaryota</taxon>
        <taxon>Metazoa</taxon>
        <taxon>Ecdysozoa</taxon>
        <taxon>Arthropoda</taxon>
        <taxon>Hexapoda</taxon>
        <taxon>Insecta</taxon>
        <taxon>Pterygota</taxon>
        <taxon>Neoptera</taxon>
        <taxon>Endopterygota</taxon>
        <taxon>Diptera</taxon>
        <taxon>Nematocera</taxon>
        <taxon>Culicoidea</taxon>
        <taxon>Culicidae</taxon>
        <taxon>Culicinae</taxon>
        <taxon>Culicini</taxon>
        <taxon>Culex</taxon>
        <taxon>Culex</taxon>
    </lineage>
</organism>
<keyword id="KW-1003">Cell membrane</keyword>
<keyword id="KW-0325">Glycoprotein</keyword>
<keyword id="KW-0378">Hydrolase</keyword>
<keyword id="KW-0472">Membrane</keyword>
<keyword id="KW-0904">Protein phosphatase</keyword>
<keyword id="KW-1185">Reference proteome</keyword>
<keyword id="KW-0732">Signal</keyword>
<keyword id="KW-0812">Transmembrane</keyword>
<keyword id="KW-1133">Transmembrane helix</keyword>
<accession>B0X4T2</accession>